<sequence length="95" mass="10685">MSYTIQAQTRTEIGKGSSRRLRHAGKVPAVIYGQGKEPVSIVFEHKDIINIQANEDFYTSVVTIVLDGKEVGVRAQAMQRHVFKPIIEHVDFVYA</sequence>
<keyword id="KW-0687">Ribonucleoprotein</keyword>
<keyword id="KW-0689">Ribosomal protein</keyword>
<keyword id="KW-0694">RNA-binding</keyword>
<keyword id="KW-0699">rRNA-binding</keyword>
<accession>A4Y6N5</accession>
<evidence type="ECO:0000255" key="1">
    <source>
        <dbReference type="HAMAP-Rule" id="MF_01336"/>
    </source>
</evidence>
<evidence type="ECO:0000305" key="2"/>
<proteinExistence type="inferred from homology"/>
<reference key="1">
    <citation type="submission" date="2007-04" db="EMBL/GenBank/DDBJ databases">
        <title>Complete sequence of Shewanella putrefaciens CN-32.</title>
        <authorList>
            <consortium name="US DOE Joint Genome Institute"/>
            <person name="Copeland A."/>
            <person name="Lucas S."/>
            <person name="Lapidus A."/>
            <person name="Barry K."/>
            <person name="Detter J.C."/>
            <person name="Glavina del Rio T."/>
            <person name="Hammon N."/>
            <person name="Israni S."/>
            <person name="Dalin E."/>
            <person name="Tice H."/>
            <person name="Pitluck S."/>
            <person name="Chain P."/>
            <person name="Malfatti S."/>
            <person name="Shin M."/>
            <person name="Vergez L."/>
            <person name="Schmutz J."/>
            <person name="Larimer F."/>
            <person name="Land M."/>
            <person name="Hauser L."/>
            <person name="Kyrpides N."/>
            <person name="Mikhailova N."/>
            <person name="Romine M.F."/>
            <person name="Fredrickson J."/>
            <person name="Tiedje J."/>
            <person name="Richardson P."/>
        </authorList>
    </citation>
    <scope>NUCLEOTIDE SEQUENCE [LARGE SCALE GENOMIC DNA]</scope>
    <source>
        <strain>CN-32 / ATCC BAA-453</strain>
    </source>
</reference>
<organism>
    <name type="scientific">Shewanella putrefaciens (strain CN-32 / ATCC BAA-453)</name>
    <dbReference type="NCBI Taxonomy" id="319224"/>
    <lineage>
        <taxon>Bacteria</taxon>
        <taxon>Pseudomonadati</taxon>
        <taxon>Pseudomonadota</taxon>
        <taxon>Gammaproteobacteria</taxon>
        <taxon>Alteromonadales</taxon>
        <taxon>Shewanellaceae</taxon>
        <taxon>Shewanella</taxon>
    </lineage>
</organism>
<protein>
    <recommendedName>
        <fullName evidence="1">Large ribosomal subunit protein bL25</fullName>
    </recommendedName>
    <alternativeName>
        <fullName evidence="2">50S ribosomal protein L25</fullName>
    </alternativeName>
</protein>
<gene>
    <name evidence="1" type="primary">rplY</name>
    <name type="ordered locus">Sputcn32_1895</name>
</gene>
<comment type="function">
    <text evidence="1">This is one of the proteins that binds to the 5S RNA in the ribosome where it forms part of the central protuberance.</text>
</comment>
<comment type="subunit">
    <text evidence="1">Part of the 50S ribosomal subunit; part of the 5S rRNA/L5/L18/L25 subcomplex. Contacts the 5S rRNA. Binds to the 5S rRNA independently of L5 and L18.</text>
</comment>
<comment type="similarity">
    <text evidence="1">Belongs to the bacterial ribosomal protein bL25 family.</text>
</comment>
<dbReference type="EMBL" id="CP000681">
    <property type="protein sequence ID" value="ABP75618.1"/>
    <property type="molecule type" value="Genomic_DNA"/>
</dbReference>
<dbReference type="SMR" id="A4Y6N5"/>
<dbReference type="STRING" id="319224.Sputcn32_1895"/>
<dbReference type="KEGG" id="spc:Sputcn32_1895"/>
<dbReference type="eggNOG" id="COG1825">
    <property type="taxonomic scope" value="Bacteria"/>
</dbReference>
<dbReference type="HOGENOM" id="CLU_137946_0_0_6"/>
<dbReference type="GO" id="GO:0022625">
    <property type="term" value="C:cytosolic large ribosomal subunit"/>
    <property type="evidence" value="ECO:0007669"/>
    <property type="project" value="TreeGrafter"/>
</dbReference>
<dbReference type="GO" id="GO:0008097">
    <property type="term" value="F:5S rRNA binding"/>
    <property type="evidence" value="ECO:0007669"/>
    <property type="project" value="InterPro"/>
</dbReference>
<dbReference type="GO" id="GO:0003735">
    <property type="term" value="F:structural constituent of ribosome"/>
    <property type="evidence" value="ECO:0007669"/>
    <property type="project" value="InterPro"/>
</dbReference>
<dbReference type="GO" id="GO:0006412">
    <property type="term" value="P:translation"/>
    <property type="evidence" value="ECO:0007669"/>
    <property type="project" value="UniProtKB-UniRule"/>
</dbReference>
<dbReference type="CDD" id="cd00495">
    <property type="entry name" value="Ribosomal_L25_TL5_CTC"/>
    <property type="match status" value="1"/>
</dbReference>
<dbReference type="FunFam" id="2.40.240.10:FF:000002">
    <property type="entry name" value="50S ribosomal protein L25"/>
    <property type="match status" value="1"/>
</dbReference>
<dbReference type="Gene3D" id="2.40.240.10">
    <property type="entry name" value="Ribosomal Protein L25, Chain P"/>
    <property type="match status" value="1"/>
</dbReference>
<dbReference type="HAMAP" id="MF_01336">
    <property type="entry name" value="Ribosomal_bL25"/>
    <property type="match status" value="1"/>
</dbReference>
<dbReference type="InterPro" id="IPR020056">
    <property type="entry name" value="Rbsml_bL25/Gln-tRNA_synth_N"/>
</dbReference>
<dbReference type="InterPro" id="IPR011035">
    <property type="entry name" value="Ribosomal_bL25/Gln-tRNA_synth"/>
</dbReference>
<dbReference type="InterPro" id="IPR001021">
    <property type="entry name" value="Ribosomal_bL25_long"/>
</dbReference>
<dbReference type="InterPro" id="IPR020055">
    <property type="entry name" value="Ribosomal_bL25_short"/>
</dbReference>
<dbReference type="InterPro" id="IPR029751">
    <property type="entry name" value="Ribosomal_L25_dom"/>
</dbReference>
<dbReference type="InterPro" id="IPR020930">
    <property type="entry name" value="Ribosomal_uL5_bac-type"/>
</dbReference>
<dbReference type="NCBIfam" id="TIGR00731">
    <property type="entry name" value="bL25_bact_ctc"/>
    <property type="match status" value="1"/>
</dbReference>
<dbReference type="NCBIfam" id="NF004612">
    <property type="entry name" value="PRK05943.1"/>
    <property type="match status" value="1"/>
</dbReference>
<dbReference type="PANTHER" id="PTHR33284">
    <property type="entry name" value="RIBOSOMAL PROTEIN L25/GLN-TRNA SYNTHETASE, ANTI-CODON-BINDING DOMAIN-CONTAINING PROTEIN"/>
    <property type="match status" value="1"/>
</dbReference>
<dbReference type="PANTHER" id="PTHR33284:SF1">
    <property type="entry name" value="RIBOSOMAL PROTEIN L25_GLN-TRNA SYNTHETASE, ANTI-CODON-BINDING DOMAIN-CONTAINING PROTEIN"/>
    <property type="match status" value="1"/>
</dbReference>
<dbReference type="Pfam" id="PF01386">
    <property type="entry name" value="Ribosomal_L25p"/>
    <property type="match status" value="1"/>
</dbReference>
<dbReference type="SUPFAM" id="SSF50715">
    <property type="entry name" value="Ribosomal protein L25-like"/>
    <property type="match status" value="1"/>
</dbReference>
<name>RL25_SHEPC</name>
<feature type="chain" id="PRO_1000052967" description="Large ribosomal subunit protein bL25">
    <location>
        <begin position="1"/>
        <end position="95"/>
    </location>
</feature>